<gene>
    <name evidence="1" type="primary">cca</name>
    <name type="ordered locus">MTH_584</name>
</gene>
<feature type="chain" id="PRO_0000139073" description="CCA-adding enzyme">
    <location>
        <begin position="1"/>
        <end position="454"/>
    </location>
</feature>
<feature type="binding site" evidence="1">
    <location>
        <position position="51"/>
    </location>
    <ligand>
        <name>ATP</name>
        <dbReference type="ChEBI" id="CHEBI:30616"/>
    </ligand>
</feature>
<feature type="binding site" evidence="1">
    <location>
        <position position="51"/>
    </location>
    <ligand>
        <name>CTP</name>
        <dbReference type="ChEBI" id="CHEBI:37563"/>
    </ligand>
</feature>
<feature type="binding site" evidence="1">
    <location>
        <position position="54"/>
    </location>
    <ligand>
        <name>ATP</name>
        <dbReference type="ChEBI" id="CHEBI:30616"/>
    </ligand>
</feature>
<feature type="binding site" evidence="1">
    <location>
        <position position="54"/>
    </location>
    <ligand>
        <name>CTP</name>
        <dbReference type="ChEBI" id="CHEBI:37563"/>
    </ligand>
</feature>
<feature type="binding site" evidence="1">
    <location>
        <position position="63"/>
    </location>
    <ligand>
        <name>Mg(2+)</name>
        <dbReference type="ChEBI" id="CHEBI:18420"/>
    </ligand>
</feature>
<feature type="binding site" evidence="1">
    <location>
        <position position="65"/>
    </location>
    <ligand>
        <name>Mg(2+)</name>
        <dbReference type="ChEBI" id="CHEBI:18420"/>
    </ligand>
</feature>
<feature type="binding site" evidence="1">
    <location>
        <position position="118"/>
    </location>
    <ligand>
        <name>Mg(2+)</name>
        <dbReference type="ChEBI" id="CHEBI:18420"/>
    </ligand>
</feature>
<feature type="binding site" evidence="1">
    <location>
        <position position="141"/>
    </location>
    <ligand>
        <name>ATP</name>
        <dbReference type="ChEBI" id="CHEBI:30616"/>
    </ligand>
</feature>
<feature type="binding site" evidence="1">
    <location>
        <position position="141"/>
    </location>
    <ligand>
        <name>CTP</name>
        <dbReference type="ChEBI" id="CHEBI:37563"/>
    </ligand>
</feature>
<feature type="binding site" evidence="1">
    <location>
        <position position="161"/>
    </location>
    <ligand>
        <name>ATP</name>
        <dbReference type="ChEBI" id="CHEBI:30616"/>
    </ligand>
</feature>
<feature type="binding site" evidence="1">
    <location>
        <position position="161"/>
    </location>
    <ligand>
        <name>CTP</name>
        <dbReference type="ChEBI" id="CHEBI:37563"/>
    </ligand>
</feature>
<feature type="binding site" evidence="1">
    <location>
        <position position="170"/>
    </location>
    <ligand>
        <name>ATP</name>
        <dbReference type="ChEBI" id="CHEBI:30616"/>
    </ligand>
</feature>
<feature type="binding site" evidence="1">
    <location>
        <position position="170"/>
    </location>
    <ligand>
        <name>CTP</name>
        <dbReference type="ChEBI" id="CHEBI:37563"/>
    </ligand>
</feature>
<accession>O26684</accession>
<proteinExistence type="inferred from homology"/>
<organism>
    <name type="scientific">Methanothermobacter thermautotrophicus (strain ATCC 29096 / DSM 1053 / JCM 10044 / NBRC 100330 / Delta H)</name>
    <name type="common">Methanobacterium thermoautotrophicum</name>
    <dbReference type="NCBI Taxonomy" id="187420"/>
    <lineage>
        <taxon>Archaea</taxon>
        <taxon>Methanobacteriati</taxon>
        <taxon>Methanobacteriota</taxon>
        <taxon>Methanomada group</taxon>
        <taxon>Methanobacteria</taxon>
        <taxon>Methanobacteriales</taxon>
        <taxon>Methanobacteriaceae</taxon>
        <taxon>Methanothermobacter</taxon>
    </lineage>
</organism>
<evidence type="ECO:0000255" key="1">
    <source>
        <dbReference type="HAMAP-Rule" id="MF_01264"/>
    </source>
</evidence>
<dbReference type="EC" id="2.7.7.72" evidence="1"/>
<dbReference type="EMBL" id="AE000666">
    <property type="protein sequence ID" value="AAB85090.1"/>
    <property type="molecule type" value="Genomic_DNA"/>
</dbReference>
<dbReference type="PIR" id="D69177">
    <property type="entry name" value="D69177"/>
</dbReference>
<dbReference type="RefSeq" id="WP_010876223.1">
    <property type="nucleotide sequence ID" value="NC_000916.1"/>
</dbReference>
<dbReference type="SMR" id="O26684"/>
<dbReference type="FunCoup" id="O26684">
    <property type="interactions" value="4"/>
</dbReference>
<dbReference type="STRING" id="187420.MTH_584"/>
<dbReference type="PaxDb" id="187420-MTH_584"/>
<dbReference type="EnsemblBacteria" id="AAB85090">
    <property type="protein sequence ID" value="AAB85090"/>
    <property type="gene ID" value="MTH_584"/>
</dbReference>
<dbReference type="GeneID" id="1470545"/>
<dbReference type="GeneID" id="77401121"/>
<dbReference type="KEGG" id="mth:MTH_584"/>
<dbReference type="PATRIC" id="fig|187420.15.peg.563"/>
<dbReference type="HOGENOM" id="CLU_044679_1_0_2"/>
<dbReference type="InParanoid" id="O26684"/>
<dbReference type="Proteomes" id="UP000005223">
    <property type="component" value="Chromosome"/>
</dbReference>
<dbReference type="GO" id="GO:0005524">
    <property type="term" value="F:ATP binding"/>
    <property type="evidence" value="ECO:0007669"/>
    <property type="project" value="UniProtKB-UniRule"/>
</dbReference>
<dbReference type="GO" id="GO:0004810">
    <property type="term" value="F:CCA tRNA nucleotidyltransferase activity"/>
    <property type="evidence" value="ECO:0007669"/>
    <property type="project" value="UniProtKB-UniRule"/>
</dbReference>
<dbReference type="GO" id="GO:0000287">
    <property type="term" value="F:magnesium ion binding"/>
    <property type="evidence" value="ECO:0007669"/>
    <property type="project" value="UniProtKB-UniRule"/>
</dbReference>
<dbReference type="GO" id="GO:0000049">
    <property type="term" value="F:tRNA binding"/>
    <property type="evidence" value="ECO:0007669"/>
    <property type="project" value="UniProtKB-UniRule"/>
</dbReference>
<dbReference type="GO" id="GO:0042245">
    <property type="term" value="P:RNA repair"/>
    <property type="evidence" value="ECO:0007669"/>
    <property type="project" value="UniProtKB-KW"/>
</dbReference>
<dbReference type="GO" id="GO:0001680">
    <property type="term" value="P:tRNA 3'-terminal CCA addition"/>
    <property type="evidence" value="ECO:0007669"/>
    <property type="project" value="UniProtKB-UniRule"/>
</dbReference>
<dbReference type="CDD" id="cd05400">
    <property type="entry name" value="NT_2-5OAS_ClassI-CCAase"/>
    <property type="match status" value="1"/>
</dbReference>
<dbReference type="Gene3D" id="3.30.70.1550">
    <property type="entry name" value="Archaeal tRNA CCA-adding enzyme catalytic domain"/>
    <property type="match status" value="1"/>
</dbReference>
<dbReference type="Gene3D" id="3.30.460.10">
    <property type="entry name" value="Beta Polymerase, domain 2"/>
    <property type="match status" value="1"/>
</dbReference>
<dbReference type="Gene3D" id="1.10.1410.30">
    <property type="entry name" value="CCA tRNA nucleotidyltransferase, domain 2"/>
    <property type="match status" value="1"/>
</dbReference>
<dbReference type="Gene3D" id="3.30.70.590">
    <property type="entry name" value="Poly(A) polymerase predicted RNA binding domain"/>
    <property type="match status" value="1"/>
</dbReference>
<dbReference type="HAMAP" id="MF_01264">
    <property type="entry name" value="CCA_arch"/>
    <property type="match status" value="1"/>
</dbReference>
<dbReference type="InterPro" id="IPR048833">
    <property type="entry name" value="CAA_C"/>
</dbReference>
<dbReference type="InterPro" id="IPR008229">
    <property type="entry name" value="CCA-adding_arc"/>
</dbReference>
<dbReference type="InterPro" id="IPR042090">
    <property type="entry name" value="CCA_tRNA_nucleotrans_2"/>
</dbReference>
<dbReference type="InterPro" id="IPR006116">
    <property type="entry name" value="NT_2-5OAS_ClassI-CCAase"/>
</dbReference>
<dbReference type="InterPro" id="IPR043519">
    <property type="entry name" value="NT_sf"/>
</dbReference>
<dbReference type="InterPro" id="IPR011068">
    <property type="entry name" value="NuclTrfase_I-like_C"/>
</dbReference>
<dbReference type="InterPro" id="IPR002934">
    <property type="entry name" value="Polymerase_NTP_transf_dom"/>
</dbReference>
<dbReference type="InterPro" id="IPR015329">
    <property type="entry name" value="tRNA_NucTransf2"/>
</dbReference>
<dbReference type="NCBIfam" id="TIGR03671">
    <property type="entry name" value="cca_archaeal"/>
    <property type="match status" value="1"/>
</dbReference>
<dbReference type="PANTHER" id="PTHR39643">
    <property type="entry name" value="CCA-ADDING ENZYME"/>
    <property type="match status" value="1"/>
</dbReference>
<dbReference type="PANTHER" id="PTHR39643:SF1">
    <property type="entry name" value="CCA-ADDING ENZYME"/>
    <property type="match status" value="1"/>
</dbReference>
<dbReference type="Pfam" id="PF21133">
    <property type="entry name" value="CAA_C"/>
    <property type="match status" value="1"/>
</dbReference>
<dbReference type="Pfam" id="PF01909">
    <property type="entry name" value="NTP_transf_2"/>
    <property type="match status" value="1"/>
</dbReference>
<dbReference type="Pfam" id="PF09249">
    <property type="entry name" value="tRNA_NucTransf2"/>
    <property type="match status" value="1"/>
</dbReference>
<dbReference type="PIRSF" id="PIRSF005335">
    <property type="entry name" value="CCA_arch"/>
    <property type="match status" value="1"/>
</dbReference>
<dbReference type="SUPFAM" id="SSF81301">
    <property type="entry name" value="Nucleotidyltransferase"/>
    <property type="match status" value="1"/>
</dbReference>
<dbReference type="SUPFAM" id="SSF55003">
    <property type="entry name" value="PAP/Archaeal CCA-adding enzyme, C-terminal domain"/>
    <property type="match status" value="1"/>
</dbReference>
<dbReference type="SUPFAM" id="SSF81631">
    <property type="entry name" value="PAP/OAS1 substrate-binding domain"/>
    <property type="match status" value="1"/>
</dbReference>
<protein>
    <recommendedName>
        <fullName evidence="1">CCA-adding enzyme</fullName>
        <ecNumber evidence="1">2.7.7.72</ecNumber>
    </recommendedName>
    <alternativeName>
        <fullName evidence="1">CCA tRNA nucleotidyltransferase</fullName>
    </alternativeName>
    <alternativeName>
        <fullName evidence="1">tRNA CCA-pyrophosphorylase</fullName>
    </alternativeName>
    <alternativeName>
        <fullName evidence="1">tRNA adenylyl-/cytidylyl- transferase</fullName>
    </alternativeName>
    <alternativeName>
        <fullName evidence="1">tRNA nucleotidyltransferase</fullName>
    </alternativeName>
    <alternativeName>
        <fullName evidence="1">tRNA-NT</fullName>
    </alternativeName>
</protein>
<reference key="1">
    <citation type="journal article" date="1997" name="J. Bacteriol.">
        <title>Complete genome sequence of Methanobacterium thermoautotrophicum deltaH: functional analysis and comparative genomics.</title>
        <authorList>
            <person name="Smith D.R."/>
            <person name="Doucette-Stamm L.A."/>
            <person name="Deloughery C."/>
            <person name="Lee H.-M."/>
            <person name="Dubois J."/>
            <person name="Aldredge T."/>
            <person name="Bashirzadeh R."/>
            <person name="Blakely D."/>
            <person name="Cook R."/>
            <person name="Gilbert K."/>
            <person name="Harrison D."/>
            <person name="Hoang L."/>
            <person name="Keagle P."/>
            <person name="Lumm W."/>
            <person name="Pothier B."/>
            <person name="Qiu D."/>
            <person name="Spadafora R."/>
            <person name="Vicare R."/>
            <person name="Wang Y."/>
            <person name="Wierzbowski J."/>
            <person name="Gibson R."/>
            <person name="Jiwani N."/>
            <person name="Caruso A."/>
            <person name="Bush D."/>
            <person name="Safer H."/>
            <person name="Patwell D."/>
            <person name="Prabhakar S."/>
            <person name="McDougall S."/>
            <person name="Shimer G."/>
            <person name="Goyal A."/>
            <person name="Pietrovski S."/>
            <person name="Church G.M."/>
            <person name="Daniels C.J."/>
            <person name="Mao J.-I."/>
            <person name="Rice P."/>
            <person name="Noelling J."/>
            <person name="Reeve J.N."/>
        </authorList>
    </citation>
    <scope>NUCLEOTIDE SEQUENCE [LARGE SCALE GENOMIC DNA]</scope>
    <source>
        <strain>ATCC 29096 / DSM 1053 / JCM 10044 / NBRC 100330 / Delta H</strain>
    </source>
</reference>
<sequence>MTTDYSNILKTIKPDGDEYRRVMELSDSLVECLNGLAEEQGIDAEAVLVGSVAKGTWLSGAADIDIFIHFPLTTPEDELKESGLRLGYGCIERFGGEAEERYASHPYVTGYIDGYEVDFVPCYRIDDASMLRSAVDRTILHTRYIQENLRDEQRDDVLLLKQFMKSTGTYGSEFRVGGFAGYLAELLVLRYGDFEGVLEGALQWRPGYIIDLEGHGTGKGFEDPLVVVDPVDRNRNVAAALTLQRMAEFVTASLNFLGNPSPEYFQPPSYSTDAAEITGTLSCRGSRVIVISTGVPDVPSDALYPQLRKTLDSVVKNLEAEGFSVLGADYWSDESKSTFMVLEMDVWELPSYLKRYGPPVWSRRHRERFLRKHERVWVEGSRLTIESPRRHRSAVSYLRDLLSKPDRLRMGKHIGVEIRRGFSVDLLDDVIGEAEKEFLEFMDAFLNPWKALER</sequence>
<comment type="function">
    <text evidence="1">Catalyzes the addition and repair of the essential 3'-terminal CCA sequence in tRNAs without using a nucleic acid template. Adds these three nucleotides in the order of C, C, and A to the tRNA nucleotide-73, using CTP and ATP as substrates and producing inorganic pyrophosphate. tRNA 3'-terminal CCA addition is required both for tRNA processing and repair. Also involved in tRNA surveillance by mediating tandem CCA addition to generate a CCACCA at the 3' terminus of unstable tRNAs. While stable tRNAs receive only 3'-terminal CCA, unstable tRNAs are marked with CCACCA and rapidly degraded.</text>
</comment>
<comment type="catalytic activity">
    <reaction evidence="1">
        <text>a tRNA precursor + 2 CTP + ATP = a tRNA with a 3' CCA end + 3 diphosphate</text>
        <dbReference type="Rhea" id="RHEA:14433"/>
        <dbReference type="Rhea" id="RHEA-COMP:10465"/>
        <dbReference type="Rhea" id="RHEA-COMP:10468"/>
        <dbReference type="ChEBI" id="CHEBI:30616"/>
        <dbReference type="ChEBI" id="CHEBI:33019"/>
        <dbReference type="ChEBI" id="CHEBI:37563"/>
        <dbReference type="ChEBI" id="CHEBI:74896"/>
        <dbReference type="ChEBI" id="CHEBI:83071"/>
        <dbReference type="EC" id="2.7.7.72"/>
    </reaction>
</comment>
<comment type="catalytic activity">
    <reaction evidence="1">
        <text>a tRNA with a 3' CCA end + 2 CTP + ATP = a tRNA with a 3' CCACCA end + 3 diphosphate</text>
        <dbReference type="Rhea" id="RHEA:76235"/>
        <dbReference type="Rhea" id="RHEA-COMP:10468"/>
        <dbReference type="Rhea" id="RHEA-COMP:18655"/>
        <dbReference type="ChEBI" id="CHEBI:30616"/>
        <dbReference type="ChEBI" id="CHEBI:33019"/>
        <dbReference type="ChEBI" id="CHEBI:37563"/>
        <dbReference type="ChEBI" id="CHEBI:83071"/>
        <dbReference type="ChEBI" id="CHEBI:195187"/>
    </reaction>
    <physiologicalReaction direction="left-to-right" evidence="1">
        <dbReference type="Rhea" id="RHEA:76236"/>
    </physiologicalReaction>
</comment>
<comment type="cofactor">
    <cofactor evidence="1">
        <name>Mg(2+)</name>
        <dbReference type="ChEBI" id="CHEBI:18420"/>
    </cofactor>
</comment>
<comment type="subunit">
    <text evidence="1">Homodimer.</text>
</comment>
<comment type="miscellaneous">
    <text evidence="1">A single active site specifically recognizes both ATP and CTP and is responsible for their addition.</text>
</comment>
<comment type="similarity">
    <text evidence="1">Belongs to the tRNA nucleotidyltransferase/poly(A) polymerase family. Archaeal CCA-adding enzyme subfamily.</text>
</comment>
<keyword id="KW-0067">ATP-binding</keyword>
<keyword id="KW-0460">Magnesium</keyword>
<keyword id="KW-0479">Metal-binding</keyword>
<keyword id="KW-0547">Nucleotide-binding</keyword>
<keyword id="KW-0548">Nucleotidyltransferase</keyword>
<keyword id="KW-1185">Reference proteome</keyword>
<keyword id="KW-0692">RNA repair</keyword>
<keyword id="KW-0694">RNA-binding</keyword>
<keyword id="KW-0808">Transferase</keyword>
<keyword id="KW-0819">tRNA processing</keyword>
<name>CCA_METTH</name>